<name>IL17L_MAGGI</name>
<proteinExistence type="evidence at transcript level"/>
<sequence>MGNFFLFAMTLVVCSVIVLLTGVADSAVICSEPTNLAEQYSQYMANATVSNMLEYLESSTAGGVASDEEEQLIYGNRICPSSIKAITTDPKSSVFERTTCPYFLVASHLSTRYPKIITEARCKCSGCVPLEENGHSDLTRCEPVYRPVRVLSRTGNCVNGVYQYAAAVHMKQEGCTCVRKTEALSGSGSGSNGSDDPIPM</sequence>
<feature type="signal peptide" evidence="2">
    <location>
        <begin position="1"/>
        <end position="26"/>
    </location>
</feature>
<feature type="chain" id="PRO_0000389424" description="Interleukin 17-like protein" evidence="2">
    <location>
        <begin position="27"/>
        <end position="200"/>
    </location>
</feature>
<feature type="glycosylation site" description="N-linked (GlcNAc...) asparagine" evidence="2">
    <location>
        <position position="46"/>
    </location>
</feature>
<feature type="glycosylation site" description="N-linked (GlcNAc...) asparagine" evidence="2">
    <location>
        <position position="192"/>
    </location>
</feature>
<feature type="disulfide bond" evidence="1">
    <location>
        <begin position="122"/>
        <end position="175"/>
    </location>
</feature>
<feature type="disulfide bond" evidence="1">
    <location>
        <begin position="127"/>
        <end position="177"/>
    </location>
</feature>
<dbReference type="EMBL" id="EF190193">
    <property type="protein sequence ID" value="ABO93467.1"/>
    <property type="molecule type" value="mRNA"/>
</dbReference>
<dbReference type="RefSeq" id="NP_001295781.1">
    <property type="nucleotide sequence ID" value="NM_001308852.1"/>
</dbReference>
<dbReference type="EnsemblMetazoa" id="G33845.2">
    <property type="protein sequence ID" value="G33845.2:cds"/>
    <property type="gene ID" value="G33845"/>
</dbReference>
<dbReference type="GeneID" id="105322542"/>
<dbReference type="KEGG" id="crg:105322542"/>
<dbReference type="HOGENOM" id="CLU_1367425_0_0_1"/>
<dbReference type="InParanoid" id="A9XE49"/>
<dbReference type="OMA" id="CAKRRTT"/>
<dbReference type="OrthoDB" id="6093351at2759"/>
<dbReference type="Proteomes" id="UP000005408">
    <property type="component" value="Unassembled WGS sequence"/>
</dbReference>
<dbReference type="GO" id="GO:0005576">
    <property type="term" value="C:extracellular region"/>
    <property type="evidence" value="ECO:0007669"/>
    <property type="project" value="UniProtKB-SubCell"/>
</dbReference>
<dbReference type="GO" id="GO:0005125">
    <property type="term" value="F:cytokine activity"/>
    <property type="evidence" value="ECO:0007669"/>
    <property type="project" value="InterPro"/>
</dbReference>
<dbReference type="Gene3D" id="2.10.90.10">
    <property type="entry name" value="Cystine-knot cytokines"/>
    <property type="match status" value="1"/>
</dbReference>
<dbReference type="InterPro" id="IPR029034">
    <property type="entry name" value="Cystine-knot_cytokine"/>
</dbReference>
<dbReference type="InterPro" id="IPR010345">
    <property type="entry name" value="IL-17_fam"/>
</dbReference>
<dbReference type="Pfam" id="PF06083">
    <property type="entry name" value="IL17"/>
    <property type="match status" value="1"/>
</dbReference>
<dbReference type="SUPFAM" id="SSF57501">
    <property type="entry name" value="Cystine-knot cytokines"/>
    <property type="match status" value="1"/>
</dbReference>
<organism>
    <name type="scientific">Magallana gigas</name>
    <name type="common">Pacific oyster</name>
    <name type="synonym">Crassostrea gigas</name>
    <dbReference type="NCBI Taxonomy" id="29159"/>
    <lineage>
        <taxon>Eukaryota</taxon>
        <taxon>Metazoa</taxon>
        <taxon>Spiralia</taxon>
        <taxon>Lophotrochozoa</taxon>
        <taxon>Mollusca</taxon>
        <taxon>Bivalvia</taxon>
        <taxon>Autobranchia</taxon>
        <taxon>Pteriomorphia</taxon>
        <taxon>Ostreida</taxon>
        <taxon>Ostreoidea</taxon>
        <taxon>Ostreidae</taxon>
        <taxon>Magallana</taxon>
    </lineage>
</organism>
<comment type="subcellular location">
    <subcellularLocation>
        <location evidence="1">Secreted</location>
    </subcellularLocation>
</comment>
<comment type="tissue specificity">
    <text evidence="3">Expressed in several tissues including hemocytes, gills, mantle, adductor muscle, labial palps, digestive glands and heart with highest levels in gills and lowest levels in adductor muscle and heart.</text>
</comment>
<comment type="induction">
    <text evidence="3">By bacterial injection. Levels increase strongly by 6 hours and slowly decline through 24 and 48 hours.</text>
</comment>
<comment type="similarity">
    <text evidence="2">Belongs to the IL-17 family.</text>
</comment>
<accession>A9XE49</accession>
<protein>
    <recommendedName>
        <fullName>Interleukin 17-like protein</fullName>
        <shortName evidence="4">CgIL-17</shortName>
    </recommendedName>
</protein>
<keyword id="KW-1015">Disulfide bond</keyword>
<keyword id="KW-0325">Glycoprotein</keyword>
<keyword id="KW-1185">Reference proteome</keyword>
<keyword id="KW-0964">Secreted</keyword>
<keyword id="KW-0732">Signal</keyword>
<evidence type="ECO:0000250" key="1">
    <source>
        <dbReference type="UniProtKB" id="Q96PD4"/>
    </source>
</evidence>
<evidence type="ECO:0000255" key="2"/>
<evidence type="ECO:0000269" key="3">
    <source>
    </source>
</evidence>
<evidence type="ECO:0000303" key="4">
    <source>
    </source>
</evidence>
<evidence type="ECO:0000305" key="5"/>
<evidence type="ECO:0000312" key="6">
    <source>
        <dbReference type="EMBL" id="ABO93467.1"/>
    </source>
</evidence>
<reference evidence="5 6" key="1">
    <citation type="journal article" date="2008" name="Dev. Comp. Immunol.">
        <title>Rapid accumulation of an interleukin 17 homolog transcript in Crassostrea gigas hemocytes following bacterial exposure.</title>
        <authorList>
            <person name="Roberts S."/>
            <person name="Gueguen Y."/>
            <person name="de Lorgeril J."/>
            <person name="Goetz F."/>
        </authorList>
    </citation>
    <scope>NUCLEOTIDE SEQUENCE [MRNA]</scope>
    <scope>TISSUE SPECIFICITY</scope>
    <scope>INDUCTION</scope>
    <source>
        <tissue evidence="3">Hemocyte</tissue>
    </source>
</reference>